<organism>
    <name type="scientific">Mus musculus</name>
    <name type="common">Mouse</name>
    <dbReference type="NCBI Taxonomy" id="10090"/>
    <lineage>
        <taxon>Eukaryota</taxon>
        <taxon>Metazoa</taxon>
        <taxon>Chordata</taxon>
        <taxon>Craniata</taxon>
        <taxon>Vertebrata</taxon>
        <taxon>Euteleostomi</taxon>
        <taxon>Mammalia</taxon>
        <taxon>Eutheria</taxon>
        <taxon>Euarchontoglires</taxon>
        <taxon>Glires</taxon>
        <taxon>Rodentia</taxon>
        <taxon>Myomorpha</taxon>
        <taxon>Muroidea</taxon>
        <taxon>Muridae</taxon>
        <taxon>Murinae</taxon>
        <taxon>Mus</taxon>
        <taxon>Mus</taxon>
    </lineage>
</organism>
<name>PCDA9_MOUSE</name>
<reference key="1">
    <citation type="journal article" date="2001" name="Genome Res.">
        <title>Comparative DNA sequence analysis of mouse and human protocadherin gene clusters.</title>
        <authorList>
            <person name="Wu Q."/>
            <person name="Zhang T."/>
            <person name="Cheng J.-F."/>
            <person name="Kim Y."/>
            <person name="Grimwood J."/>
            <person name="Schmutz J."/>
            <person name="Dickson M."/>
            <person name="Noonan J.P."/>
            <person name="Zhang M.Q."/>
            <person name="Myers R.M."/>
            <person name="Maniatis T."/>
        </authorList>
    </citation>
    <scope>NUCLEOTIDE SEQUENCE [MRNA]</scope>
    <source>
        <tissue>Brain</tissue>
    </source>
</reference>
<reference key="2">
    <citation type="journal article" date="2009" name="PLoS Biol.">
        <title>Lineage-specific biology revealed by a finished genome assembly of the mouse.</title>
        <authorList>
            <person name="Church D.M."/>
            <person name="Goodstadt L."/>
            <person name="Hillier L.W."/>
            <person name="Zody M.C."/>
            <person name="Goldstein S."/>
            <person name="She X."/>
            <person name="Bult C.J."/>
            <person name="Agarwala R."/>
            <person name="Cherry J.L."/>
            <person name="DiCuccio M."/>
            <person name="Hlavina W."/>
            <person name="Kapustin Y."/>
            <person name="Meric P."/>
            <person name="Maglott D."/>
            <person name="Birtle Z."/>
            <person name="Marques A.C."/>
            <person name="Graves T."/>
            <person name="Zhou S."/>
            <person name="Teague B."/>
            <person name="Potamousis K."/>
            <person name="Churas C."/>
            <person name="Place M."/>
            <person name="Herschleb J."/>
            <person name="Runnheim R."/>
            <person name="Forrest D."/>
            <person name="Amos-Landgraf J."/>
            <person name="Schwartz D.C."/>
            <person name="Cheng Z."/>
            <person name="Lindblad-Toh K."/>
            <person name="Eichler E.E."/>
            <person name="Ponting C.P."/>
        </authorList>
    </citation>
    <scope>NUCLEOTIDE SEQUENCE [LARGE SCALE GENOMIC DNA]</scope>
    <source>
        <strain>C57BL/6J</strain>
    </source>
</reference>
<accession>Q91Y11</accession>
<sequence>MRLGNRPEDIRTCVHLRWHIHGLLRQENASVVISKCLRHGAWRLLLWLLLLATWDVGSGQLHYSVPEEAKHGTFVGRIAQDLGLELAELVPRLFRVVSKDRGDLLEVNLQNGILFVNSRIDREELCGQNAECSIHLEVIVDRPLQVFHVEVEVRDINDNPPIFSVAEQKILVAESRLLDSRFPLEGASDADVGENSMLTYKLSSNEFFILDIVNKRGKGKFPVLVLRKLIDREENPQLKLLLTATDGGKPEFTGSVSLLIQVLDVNDNAPVFDRSVYEVKMYENQENKTLVIWLNATDSDEGINKEVEYSFSSLASSIIRQKFLINEKTGEIKINGAIDFEESNNYEIHVDATDKGYPPMVAHCTVLVEILDENDNAPEIVLTSLSLPVKEDAPLGSVIALISVSDKDSGVNGQVTCSLTNHVPFKLVSTFKNYYSLVLDSALDRETTADYKVVVTARDGGSPSLWATASVSVEVADVNDNAPAFAHPEYTVFVKENNPPGVHIFTVLAVDADAQENALVSYSLVERRVGERLLSSYVSVHAESGKVFALQPLDHEELELLQFQVSARDAGVPALGSNVTLQVFVQDENDNPPTLLGHQSGGPAGEFSQLVSRSVGAGHVVSKVRAVDADSGYNAWLSYELHPTVGARSPFRVGLYTGEISMTRALDESDLPRQRLLVLVKDHGEPMLIATATVLVSLVENGQVPKASSQGLPNSSRREASLMDVNVYLIIAICAVSSLLVLTLLLYTALRCSAVPMQAGCGLGKPTLVCSSAVGTWSYSQQRQQRVCSGEGPPKTDLMAFSPSLTPCPVAEVGMESHSVGGDVPGKPRQPNPDWRYSASLRAGMHSSVHLEEAGILRAGPGGPDQQWPTVSSATPEPEAGEVSPPVGAGVNSNSWTFKYGPGNPKQSGPGELPDKFIIPGSPAIISIRQEPANNQIDKSDFITFGKKEETKKKKKKKKGNKTQEKKEKGNSTTDNSDQ</sequence>
<keyword id="KW-0106">Calcium</keyword>
<keyword id="KW-0130">Cell adhesion</keyword>
<keyword id="KW-1003">Cell membrane</keyword>
<keyword id="KW-0325">Glycoprotein</keyword>
<keyword id="KW-0472">Membrane</keyword>
<keyword id="KW-1185">Reference proteome</keyword>
<keyword id="KW-0677">Repeat</keyword>
<keyword id="KW-0732">Signal</keyword>
<keyword id="KW-0812">Transmembrane</keyword>
<keyword id="KW-1133">Transmembrane helix</keyword>
<evidence type="ECO:0000255" key="1"/>
<evidence type="ECO:0000255" key="2">
    <source>
        <dbReference type="PROSITE-ProRule" id="PRU00043"/>
    </source>
</evidence>
<evidence type="ECO:0000256" key="3">
    <source>
        <dbReference type="SAM" id="MobiDB-lite"/>
    </source>
</evidence>
<evidence type="ECO:0000303" key="4">
    <source>
    </source>
</evidence>
<evidence type="ECO:0000305" key="5"/>
<evidence type="ECO:0000312" key="6">
    <source>
        <dbReference type="EMBL" id="AAK26056.1"/>
    </source>
</evidence>
<proteinExistence type="evidence at transcript level"/>
<comment type="function">
    <text evidence="4">Potential calcium-dependent cell-adhesion protein. May be involved in the establishment and maintenance of specific neuronal connections in the brain.</text>
</comment>
<comment type="subcellular location">
    <subcellularLocation>
        <location evidence="4">Cell membrane</location>
        <topology evidence="4">Single-pass type I membrane protein</topology>
    </subcellularLocation>
</comment>
<comment type="miscellaneous">
    <text evidence="4">The protocadherins alpha are expressed from a single gene cluster similarly to immunoglobulin and T-cell receptors. The N-terminal region containing the 6 extracellular cadherin domains, unique to each protocadherin alpha, is encoded by one of the large exons found in tandem array within the gene cluster. The C-terminal region, identical to all protocadherins alpha, is encoded by 3 shared exons.</text>
</comment>
<protein>
    <recommendedName>
        <fullName evidence="6">Protocadherin alpha-9</fullName>
        <shortName>PCDH-alpha-9</shortName>
    </recommendedName>
</protein>
<gene>
    <name evidence="6" type="primary">Pcdha9</name>
</gene>
<dbReference type="EMBL" id="AC020968">
    <property type="status" value="NOT_ANNOTATED_CDS"/>
    <property type="molecule type" value="Genomic_DNA"/>
</dbReference>
<dbReference type="EMBL" id="AC020972">
    <property type="status" value="NOT_ANNOTATED_CDS"/>
    <property type="molecule type" value="Genomic_DNA"/>
</dbReference>
<dbReference type="EMBL" id="AC020973">
    <property type="status" value="NOT_ANNOTATED_CDS"/>
    <property type="molecule type" value="Genomic_DNA"/>
</dbReference>
<dbReference type="EMBL" id="AY013767">
    <property type="protein sequence ID" value="AAK26056.1"/>
    <property type="molecule type" value="mRNA"/>
</dbReference>
<dbReference type="CCDS" id="CCDS37777.1"/>
<dbReference type="RefSeq" id="NP_619602.1">
    <property type="nucleotide sequence ID" value="NM_138661.1"/>
</dbReference>
<dbReference type="SMR" id="Q91Y11"/>
<dbReference type="FunCoup" id="Q91Y11">
    <property type="interactions" value="452"/>
</dbReference>
<dbReference type="GlyCosmos" id="Q91Y11">
    <property type="glycosylation" value="3 sites, No reported glycans"/>
</dbReference>
<dbReference type="GlyGen" id="Q91Y11">
    <property type="glycosylation" value="4 sites, 1 N-linked glycan (1 site)"/>
</dbReference>
<dbReference type="iPTMnet" id="Q91Y11"/>
<dbReference type="PhosphoSitePlus" id="Q91Y11"/>
<dbReference type="ProteomicsDB" id="289322"/>
<dbReference type="Antibodypedia" id="45503">
    <property type="antibodies" value="150 antibodies from 21 providers"/>
</dbReference>
<dbReference type="DNASU" id="192161"/>
<dbReference type="Ensembl" id="ENSMUST00000115659.6">
    <property type="protein sequence ID" value="ENSMUSP00000111323.4"/>
    <property type="gene ID" value="ENSMUSG00000103770.2"/>
</dbReference>
<dbReference type="GeneID" id="192161"/>
<dbReference type="KEGG" id="mmu:192161"/>
<dbReference type="UCSC" id="uc008epe.2">
    <property type="organism name" value="mouse"/>
</dbReference>
<dbReference type="AGR" id="MGI:2447322"/>
<dbReference type="CTD" id="9752"/>
<dbReference type="MGI" id="MGI:2447322">
    <property type="gene designation" value="Pcdha9"/>
</dbReference>
<dbReference type="VEuPathDB" id="HostDB:ENSMUSG00000103770"/>
<dbReference type="GeneTree" id="ENSGT00940000164036"/>
<dbReference type="HOGENOM" id="CLU_006480_0_1_1"/>
<dbReference type="InParanoid" id="Q91Y11"/>
<dbReference type="OMA" id="INREIYY"/>
<dbReference type="OrthoDB" id="40063at9989"/>
<dbReference type="BioGRID-ORCS" id="192161">
    <property type="hits" value="1 hit in 71 CRISPR screens"/>
</dbReference>
<dbReference type="PRO" id="PR:Q91Y11"/>
<dbReference type="Proteomes" id="UP000000589">
    <property type="component" value="Chromosome 18"/>
</dbReference>
<dbReference type="RNAct" id="Q91Y11">
    <property type="molecule type" value="protein"/>
</dbReference>
<dbReference type="Bgee" id="ENSMUSG00000103770">
    <property type="expression patterns" value="Expressed in olfactory bulb granule cell layer and 33 other cell types or tissues"/>
</dbReference>
<dbReference type="GO" id="GO:0044291">
    <property type="term" value="C:cell-cell contact zone"/>
    <property type="evidence" value="ECO:0000314"/>
    <property type="project" value="MGI"/>
</dbReference>
<dbReference type="GO" id="GO:0016020">
    <property type="term" value="C:membrane"/>
    <property type="evidence" value="ECO:0000314"/>
    <property type="project" value="MGI"/>
</dbReference>
<dbReference type="GO" id="GO:0005886">
    <property type="term" value="C:plasma membrane"/>
    <property type="evidence" value="ECO:0007669"/>
    <property type="project" value="UniProtKB-SubCell"/>
</dbReference>
<dbReference type="GO" id="GO:0005509">
    <property type="term" value="F:calcium ion binding"/>
    <property type="evidence" value="ECO:0007669"/>
    <property type="project" value="InterPro"/>
</dbReference>
<dbReference type="GO" id="GO:0035904">
    <property type="term" value="P:aorta development"/>
    <property type="evidence" value="ECO:0000315"/>
    <property type="project" value="MGI"/>
</dbReference>
<dbReference type="GO" id="GO:0003176">
    <property type="term" value="P:aortic valve development"/>
    <property type="evidence" value="ECO:0000315"/>
    <property type="project" value="MGI"/>
</dbReference>
<dbReference type="GO" id="GO:0006915">
    <property type="term" value="P:apoptotic process"/>
    <property type="evidence" value="ECO:0000247"/>
    <property type="project" value="MGI"/>
</dbReference>
<dbReference type="GO" id="GO:0003218">
    <property type="term" value="P:cardiac left ventricle formation"/>
    <property type="evidence" value="ECO:0000266"/>
    <property type="project" value="MGI"/>
</dbReference>
<dbReference type="GO" id="GO:0016477">
    <property type="term" value="P:cell migration"/>
    <property type="evidence" value="ECO:0000247"/>
    <property type="project" value="MGI"/>
</dbReference>
<dbReference type="GO" id="GO:0008283">
    <property type="term" value="P:cell population proliferation"/>
    <property type="evidence" value="ECO:0000247"/>
    <property type="project" value="MGI"/>
</dbReference>
<dbReference type="GO" id="GO:0001892">
    <property type="term" value="P:embryonic placenta development"/>
    <property type="evidence" value="ECO:0000316"/>
    <property type="project" value="MGI"/>
</dbReference>
<dbReference type="GO" id="GO:0010467">
    <property type="term" value="P:gene expression"/>
    <property type="evidence" value="ECO:0000315"/>
    <property type="project" value="MGI"/>
</dbReference>
<dbReference type="GO" id="GO:0007507">
    <property type="term" value="P:heart development"/>
    <property type="evidence" value="ECO:0000315"/>
    <property type="project" value="MGI"/>
</dbReference>
<dbReference type="GO" id="GO:0003170">
    <property type="term" value="P:heart valve development"/>
    <property type="evidence" value="ECO:0000315"/>
    <property type="project" value="MGI"/>
</dbReference>
<dbReference type="GO" id="GO:0007156">
    <property type="term" value="P:homophilic cell adhesion via plasma membrane adhesion molecules"/>
    <property type="evidence" value="ECO:0007669"/>
    <property type="project" value="InterPro"/>
</dbReference>
<dbReference type="GO" id="GO:0001701">
    <property type="term" value="P:in utero embryonic development"/>
    <property type="evidence" value="ECO:0000316"/>
    <property type="project" value="MGI"/>
</dbReference>
<dbReference type="CDD" id="cd11304">
    <property type="entry name" value="Cadherin_repeat"/>
    <property type="match status" value="6"/>
</dbReference>
<dbReference type="FunFam" id="2.60.40.60:FF:000001">
    <property type="entry name" value="Protocadherin alpha 2"/>
    <property type="match status" value="1"/>
</dbReference>
<dbReference type="FunFam" id="2.60.40.60:FF:000002">
    <property type="entry name" value="Protocadherin alpha 2"/>
    <property type="match status" value="1"/>
</dbReference>
<dbReference type="FunFam" id="2.60.40.60:FF:000003">
    <property type="entry name" value="Protocadherin alpha 2"/>
    <property type="match status" value="1"/>
</dbReference>
<dbReference type="FunFam" id="2.60.40.60:FF:000006">
    <property type="entry name" value="Protocadherin alpha 2"/>
    <property type="match status" value="1"/>
</dbReference>
<dbReference type="FunFam" id="2.60.40.60:FF:000007">
    <property type="entry name" value="Protocadherin alpha 2"/>
    <property type="match status" value="1"/>
</dbReference>
<dbReference type="FunFam" id="2.60.40.60:FF:000233">
    <property type="entry name" value="Protocadherin gamma-A3 isoform 1"/>
    <property type="match status" value="1"/>
</dbReference>
<dbReference type="Gene3D" id="2.60.40.60">
    <property type="entry name" value="Cadherins"/>
    <property type="match status" value="6"/>
</dbReference>
<dbReference type="InterPro" id="IPR002126">
    <property type="entry name" value="Cadherin-like_dom"/>
</dbReference>
<dbReference type="InterPro" id="IPR015919">
    <property type="entry name" value="Cadherin-like_sf"/>
</dbReference>
<dbReference type="InterPro" id="IPR031904">
    <property type="entry name" value="Cadherin_CBD"/>
</dbReference>
<dbReference type="InterPro" id="IPR020894">
    <property type="entry name" value="Cadherin_CS"/>
</dbReference>
<dbReference type="InterPro" id="IPR013164">
    <property type="entry name" value="Cadherin_N"/>
</dbReference>
<dbReference type="InterPro" id="IPR050174">
    <property type="entry name" value="Protocadherin/Cadherin-CA"/>
</dbReference>
<dbReference type="PANTHER" id="PTHR24028">
    <property type="entry name" value="CADHERIN-87A"/>
    <property type="match status" value="1"/>
</dbReference>
<dbReference type="PANTHER" id="PTHR24028:SF124">
    <property type="entry name" value="PROTOCADHERIN ALPHA-10"/>
    <property type="match status" value="1"/>
</dbReference>
<dbReference type="Pfam" id="PF00028">
    <property type="entry name" value="Cadherin"/>
    <property type="match status" value="4"/>
</dbReference>
<dbReference type="Pfam" id="PF08266">
    <property type="entry name" value="Cadherin_2"/>
    <property type="match status" value="1"/>
</dbReference>
<dbReference type="Pfam" id="PF15974">
    <property type="entry name" value="Cadherin_tail"/>
    <property type="match status" value="1"/>
</dbReference>
<dbReference type="PRINTS" id="PR00205">
    <property type="entry name" value="CADHERIN"/>
</dbReference>
<dbReference type="SMART" id="SM00112">
    <property type="entry name" value="CA"/>
    <property type="match status" value="6"/>
</dbReference>
<dbReference type="SUPFAM" id="SSF49313">
    <property type="entry name" value="Cadherin-like"/>
    <property type="match status" value="6"/>
</dbReference>
<dbReference type="PROSITE" id="PS00232">
    <property type="entry name" value="CADHERIN_1"/>
    <property type="match status" value="5"/>
</dbReference>
<dbReference type="PROSITE" id="PS50268">
    <property type="entry name" value="CADHERIN_2"/>
    <property type="match status" value="6"/>
</dbReference>
<feature type="signal peptide" evidence="1">
    <location>
        <begin position="1"/>
        <end position="59"/>
    </location>
</feature>
<feature type="chain" id="PRO_0000431484" description="Protocadherin alpha-9" evidence="1">
    <location>
        <begin position="60"/>
        <end position="979"/>
    </location>
</feature>
<feature type="topological domain" description="Extracellular" evidence="5">
    <location>
        <begin position="60"/>
        <end position="726"/>
    </location>
</feature>
<feature type="transmembrane region" description="Helical" evidence="1">
    <location>
        <begin position="727"/>
        <end position="747"/>
    </location>
</feature>
<feature type="topological domain" description="Cytoplasmic" evidence="5">
    <location>
        <begin position="748"/>
        <end position="979"/>
    </location>
</feature>
<feature type="domain" description="Cadherin 1" evidence="2">
    <location>
        <begin position="64"/>
        <end position="163"/>
    </location>
</feature>
<feature type="domain" description="Cadherin 2" evidence="2">
    <location>
        <begin position="164"/>
        <end position="272"/>
    </location>
</feature>
<feature type="domain" description="Cadherin 3" evidence="2">
    <location>
        <begin position="273"/>
        <end position="380"/>
    </location>
</feature>
<feature type="domain" description="Cadherin 4" evidence="2">
    <location>
        <begin position="381"/>
        <end position="485"/>
    </location>
</feature>
<feature type="domain" description="Cadherin 5" evidence="2">
    <location>
        <begin position="486"/>
        <end position="595"/>
    </location>
</feature>
<feature type="domain" description="Cadherin 6" evidence="2">
    <location>
        <begin position="611"/>
        <end position="707"/>
    </location>
</feature>
<feature type="repeat" description="PXXP 1">
    <location>
        <begin position="763"/>
        <end position="766"/>
    </location>
</feature>
<feature type="repeat" description="PXXP 2">
    <location>
        <begin position="828"/>
        <end position="831"/>
    </location>
</feature>
<feature type="repeat" description="PXXP 3">
    <location>
        <begin position="861"/>
        <end position="864"/>
    </location>
</feature>
<feature type="repeat" description="PXXP 4">
    <location>
        <begin position="902"/>
        <end position="905"/>
    </location>
</feature>
<feature type="repeat" description="PXXP 5">
    <location>
        <begin position="920"/>
        <end position="923"/>
    </location>
</feature>
<feature type="region of interest" description="5 X 4 AA repeats of P-X-X-P">
    <location>
        <begin position="763"/>
        <end position="923"/>
    </location>
</feature>
<feature type="region of interest" description="Disordered" evidence="3">
    <location>
        <begin position="859"/>
        <end position="979"/>
    </location>
</feature>
<feature type="compositionally biased region" description="Basic and acidic residues" evidence="3">
    <location>
        <begin position="938"/>
        <end position="952"/>
    </location>
</feature>
<feature type="glycosylation site" description="N-linked (GlcNAc...) asparagine" evidence="1">
    <location>
        <position position="287"/>
    </location>
</feature>
<feature type="glycosylation site" description="N-linked (GlcNAc...) asparagine" evidence="1">
    <location>
        <position position="295"/>
    </location>
</feature>
<feature type="glycosylation site" description="N-linked (GlcNAc...) asparagine" evidence="1">
    <location>
        <position position="578"/>
    </location>
</feature>